<comment type="catalytic activity">
    <reaction evidence="1">
        <text>(2R)-3-phosphoglycerate + ATP = (2R)-3-phospho-glyceroyl phosphate + ADP</text>
        <dbReference type="Rhea" id="RHEA:14801"/>
        <dbReference type="ChEBI" id="CHEBI:30616"/>
        <dbReference type="ChEBI" id="CHEBI:57604"/>
        <dbReference type="ChEBI" id="CHEBI:58272"/>
        <dbReference type="ChEBI" id="CHEBI:456216"/>
        <dbReference type="EC" id="2.7.2.3"/>
    </reaction>
</comment>
<comment type="pathway">
    <text evidence="1">Carbohydrate degradation; glycolysis; pyruvate from D-glyceraldehyde 3-phosphate: step 2/5.</text>
</comment>
<comment type="subunit">
    <text evidence="1">Monomer.</text>
</comment>
<comment type="subcellular location">
    <subcellularLocation>
        <location evidence="1">Cytoplasm</location>
    </subcellularLocation>
</comment>
<comment type="similarity">
    <text evidence="1">Belongs to the phosphoglycerate kinase family.</text>
</comment>
<evidence type="ECO:0000255" key="1">
    <source>
        <dbReference type="HAMAP-Rule" id="MF_00145"/>
    </source>
</evidence>
<proteinExistence type="inferred from homology"/>
<name>PGK_CELJU</name>
<gene>
    <name evidence="1" type="primary">pgk</name>
    <name type="ordered locus">CJA_0211</name>
</gene>
<feature type="chain" id="PRO_1000096323" description="Phosphoglycerate kinase">
    <location>
        <begin position="1"/>
        <end position="390"/>
    </location>
</feature>
<feature type="binding site" evidence="1">
    <location>
        <begin position="21"/>
        <end position="23"/>
    </location>
    <ligand>
        <name>substrate</name>
    </ligand>
</feature>
<feature type="binding site" evidence="1">
    <location>
        <position position="36"/>
    </location>
    <ligand>
        <name>substrate</name>
    </ligand>
</feature>
<feature type="binding site" evidence="1">
    <location>
        <begin position="59"/>
        <end position="62"/>
    </location>
    <ligand>
        <name>substrate</name>
    </ligand>
</feature>
<feature type="binding site" evidence="1">
    <location>
        <position position="112"/>
    </location>
    <ligand>
        <name>substrate</name>
    </ligand>
</feature>
<feature type="binding site" evidence="1">
    <location>
        <position position="145"/>
    </location>
    <ligand>
        <name>substrate</name>
    </ligand>
</feature>
<feature type="binding site" evidence="1">
    <location>
        <position position="196"/>
    </location>
    <ligand>
        <name>ATP</name>
        <dbReference type="ChEBI" id="CHEBI:30616"/>
    </ligand>
</feature>
<feature type="binding site" evidence="1">
    <location>
        <position position="317"/>
    </location>
    <ligand>
        <name>ATP</name>
        <dbReference type="ChEBI" id="CHEBI:30616"/>
    </ligand>
</feature>
<feature type="binding site" evidence="1">
    <location>
        <begin position="343"/>
        <end position="346"/>
    </location>
    <ligand>
        <name>ATP</name>
        <dbReference type="ChEBI" id="CHEBI:30616"/>
    </ligand>
</feature>
<dbReference type="EC" id="2.7.2.3" evidence="1"/>
<dbReference type="EMBL" id="CP000934">
    <property type="protein sequence ID" value="ACE84703.1"/>
    <property type="molecule type" value="Genomic_DNA"/>
</dbReference>
<dbReference type="RefSeq" id="WP_012485894.1">
    <property type="nucleotide sequence ID" value="NC_010995.1"/>
</dbReference>
<dbReference type="SMR" id="B3PGF6"/>
<dbReference type="STRING" id="498211.CJA_0211"/>
<dbReference type="KEGG" id="cja:CJA_0211"/>
<dbReference type="eggNOG" id="COG0126">
    <property type="taxonomic scope" value="Bacteria"/>
</dbReference>
<dbReference type="HOGENOM" id="CLU_025427_0_2_6"/>
<dbReference type="OrthoDB" id="9808460at2"/>
<dbReference type="UniPathway" id="UPA00109">
    <property type="reaction ID" value="UER00185"/>
</dbReference>
<dbReference type="Proteomes" id="UP000001036">
    <property type="component" value="Chromosome"/>
</dbReference>
<dbReference type="GO" id="GO:0005829">
    <property type="term" value="C:cytosol"/>
    <property type="evidence" value="ECO:0007669"/>
    <property type="project" value="TreeGrafter"/>
</dbReference>
<dbReference type="GO" id="GO:0043531">
    <property type="term" value="F:ADP binding"/>
    <property type="evidence" value="ECO:0007669"/>
    <property type="project" value="TreeGrafter"/>
</dbReference>
<dbReference type="GO" id="GO:0005524">
    <property type="term" value="F:ATP binding"/>
    <property type="evidence" value="ECO:0007669"/>
    <property type="project" value="UniProtKB-KW"/>
</dbReference>
<dbReference type="GO" id="GO:0004618">
    <property type="term" value="F:phosphoglycerate kinase activity"/>
    <property type="evidence" value="ECO:0007669"/>
    <property type="project" value="UniProtKB-UniRule"/>
</dbReference>
<dbReference type="GO" id="GO:0006094">
    <property type="term" value="P:gluconeogenesis"/>
    <property type="evidence" value="ECO:0007669"/>
    <property type="project" value="TreeGrafter"/>
</dbReference>
<dbReference type="GO" id="GO:0006096">
    <property type="term" value="P:glycolytic process"/>
    <property type="evidence" value="ECO:0007669"/>
    <property type="project" value="UniProtKB-UniRule"/>
</dbReference>
<dbReference type="FunFam" id="3.40.50.1260:FF:000001">
    <property type="entry name" value="Phosphoglycerate kinase"/>
    <property type="match status" value="1"/>
</dbReference>
<dbReference type="FunFam" id="3.40.50.1260:FF:000002">
    <property type="entry name" value="Phosphoglycerate kinase"/>
    <property type="match status" value="1"/>
</dbReference>
<dbReference type="Gene3D" id="3.40.50.1260">
    <property type="entry name" value="Phosphoglycerate kinase, N-terminal domain"/>
    <property type="match status" value="2"/>
</dbReference>
<dbReference type="HAMAP" id="MF_00145">
    <property type="entry name" value="Phosphoglyc_kinase"/>
    <property type="match status" value="1"/>
</dbReference>
<dbReference type="InterPro" id="IPR001576">
    <property type="entry name" value="Phosphoglycerate_kinase"/>
</dbReference>
<dbReference type="InterPro" id="IPR015911">
    <property type="entry name" value="Phosphoglycerate_kinase_CS"/>
</dbReference>
<dbReference type="InterPro" id="IPR015824">
    <property type="entry name" value="Phosphoglycerate_kinase_N"/>
</dbReference>
<dbReference type="InterPro" id="IPR036043">
    <property type="entry name" value="Phosphoglycerate_kinase_sf"/>
</dbReference>
<dbReference type="PANTHER" id="PTHR11406">
    <property type="entry name" value="PHOSPHOGLYCERATE KINASE"/>
    <property type="match status" value="1"/>
</dbReference>
<dbReference type="PANTHER" id="PTHR11406:SF23">
    <property type="entry name" value="PHOSPHOGLYCERATE KINASE 1, CHLOROPLASTIC-RELATED"/>
    <property type="match status" value="1"/>
</dbReference>
<dbReference type="Pfam" id="PF00162">
    <property type="entry name" value="PGK"/>
    <property type="match status" value="1"/>
</dbReference>
<dbReference type="PIRSF" id="PIRSF000724">
    <property type="entry name" value="Pgk"/>
    <property type="match status" value="1"/>
</dbReference>
<dbReference type="PRINTS" id="PR00477">
    <property type="entry name" value="PHGLYCKINASE"/>
</dbReference>
<dbReference type="SUPFAM" id="SSF53748">
    <property type="entry name" value="Phosphoglycerate kinase"/>
    <property type="match status" value="1"/>
</dbReference>
<dbReference type="PROSITE" id="PS00111">
    <property type="entry name" value="PGLYCERATE_KINASE"/>
    <property type="match status" value="1"/>
</dbReference>
<keyword id="KW-0067">ATP-binding</keyword>
<keyword id="KW-0963">Cytoplasm</keyword>
<keyword id="KW-0324">Glycolysis</keyword>
<keyword id="KW-0418">Kinase</keyword>
<keyword id="KW-0547">Nucleotide-binding</keyword>
<keyword id="KW-1185">Reference proteome</keyword>
<keyword id="KW-0808">Transferase</keyword>
<sequence length="390" mass="41061">MTVKLMKDQDLAGKRVLIREDLNVPLDGGRITSTVRIDAAIPTLKAALEAGAKVAVMSHLGRPDEGVYDAAASLAPVAKYLSEKLGREVPLVQDWIDGYSADADLVLLENVRFNKGEGKNDDALAQKMAALCDVFVMDAFGTAHRAQASTHGVAKFAPIACAGPLLAAELDALGKVLDKPARPLVAIVGGSKVSTKLSVLDAVSKIADVLVVGGGISNTFVASAGNEVGNSLYEKDLIPEAQRLRAQTEVVFATDVRVTKEGFKEWSHNSVAVAKKASEIQADEEIVDYGPETAARVAEIIKNAKTVLWNGPCGVFEFDAFAQGTEVVARAIAESEAFSIAGGGDTLAAIDKWNLADKISYVSTGGGAFLEFVEGKKLPAVAILEERAKA</sequence>
<accession>B3PGF6</accession>
<reference key="1">
    <citation type="journal article" date="2008" name="J. Bacteriol.">
        <title>Insights into plant cell wall degradation from the genome sequence of the soil bacterium Cellvibrio japonicus.</title>
        <authorList>
            <person name="DeBoy R.T."/>
            <person name="Mongodin E.F."/>
            <person name="Fouts D.E."/>
            <person name="Tailford L.E."/>
            <person name="Khouri H."/>
            <person name="Emerson J.B."/>
            <person name="Mohamoud Y."/>
            <person name="Watkins K."/>
            <person name="Henrissat B."/>
            <person name="Gilbert H.J."/>
            <person name="Nelson K.E."/>
        </authorList>
    </citation>
    <scope>NUCLEOTIDE SEQUENCE [LARGE SCALE GENOMIC DNA]</scope>
    <source>
        <strain>Ueda107</strain>
    </source>
</reference>
<protein>
    <recommendedName>
        <fullName evidence="1">Phosphoglycerate kinase</fullName>
        <ecNumber evidence="1">2.7.2.3</ecNumber>
    </recommendedName>
</protein>
<organism>
    <name type="scientific">Cellvibrio japonicus (strain Ueda107)</name>
    <name type="common">Pseudomonas fluorescens subsp. cellulosa</name>
    <dbReference type="NCBI Taxonomy" id="498211"/>
    <lineage>
        <taxon>Bacteria</taxon>
        <taxon>Pseudomonadati</taxon>
        <taxon>Pseudomonadota</taxon>
        <taxon>Gammaproteobacteria</taxon>
        <taxon>Cellvibrionales</taxon>
        <taxon>Cellvibrionaceae</taxon>
        <taxon>Cellvibrio</taxon>
    </lineage>
</organism>